<evidence type="ECO:0000250" key="1">
    <source>
        <dbReference type="UniProtKB" id="A2PZA5"/>
    </source>
</evidence>
<evidence type="ECO:0000250" key="2">
    <source>
        <dbReference type="UniProtKB" id="Q12051"/>
    </source>
</evidence>
<evidence type="ECO:0000250" key="3">
    <source>
        <dbReference type="UniProtKB" id="Q40577"/>
    </source>
</evidence>
<evidence type="ECO:0000256" key="4">
    <source>
        <dbReference type="SAM" id="MobiDB-lite"/>
    </source>
</evidence>
<evidence type="ECO:0000269" key="5">
    <source>
    </source>
</evidence>
<evidence type="ECO:0000269" key="6">
    <source>
    </source>
</evidence>
<evidence type="ECO:0000303" key="7">
    <source>
    </source>
</evidence>
<evidence type="ECO:0000305" key="8"/>
<evidence type="ECO:0000305" key="9">
    <source>
    </source>
</evidence>
<evidence type="ECO:0000305" key="10">
    <source>
    </source>
</evidence>
<evidence type="ECO:0007829" key="11">
    <source>
        <dbReference type="PDB" id="7S0M"/>
    </source>
</evidence>
<sequence>MSPMDLQESAAALVRQLGERVEDRRGFGFMSPAIYDTAWVSMISKTIDDQKTWLFAECFQYILSHQLEDGGWAMYASEIDAILNTSASLLSLKRHLSNPYQITSITQEDLSARINRAQNALQKLLNEWNVDSTLHVGFEILVPALLRYLEDEGIAFAFSGRERLLEIEKQKLSKFKAQYLYLPIKVTALHSLEAFIGAIEFDKVSHHKVSGAFMASPSSTAAYMMHATQWDDECEDYLRHVIAHASGKGSGGVPSAFPSTIFESVWPLSTLLKVGYDLNSAPFIEKIRSYLHDAYIAEKGILGFTPFVGADADDTATTILVLNLLNQPVSVDAMLKEFEEEHHFKTYSQERNPSFSANCNVLLALLYSQEPSLYSAQIEKAIRFLYKQFTDSEMDVRDKWNLSPYYSWMLMTQAITRLTTLQKTSKLSTLRDDSISKGLISLLFRIASTVVKDQKPGGSWGTRASKEETAYAVLILTYAFYLDEVTESLRHDIKIAIENGCSFLSERTMQSDSEWLWVEKVTYKSEVLSEAYILAALKRAADLPDENAEAAPVINGISTNGFEHTDRINGKLKVNGTNGTNGSHETNGINGTHEIEQINGVNGTNGHSDVPHDTNGWVEEPTAINETNGHYVNGTNHETPLTNGISNGDSVSVHTDHSDSYYQRSDWTADEEQILLGPFDYLESLPGKNMRSQLIQSFNTWLKVPTESLDVIIKVISMLHTASLLIDDIQDQSILRRGQPVAHSIFGTAQAMNSGNYVYFLALREVQKLQNPKAISIYVDSLIDLHRGQGMELFWRDSLMCPTEEQYLDMVANKTGGLFCLAIQLMQAEATIQVDFIPLVRLLGIIFQICDDYLNLKSTAYTDNKGLCEDLTEGKFSFPIIHSIRSNPGNRQLINILKQKPREDDIKRYALSYMESTNSFEYTRGVVRKLKTEAIDTIQGLEKHGLEENIGIRKILARMSLEL</sequence>
<comment type="function">
    <text evidence="5 6">Bifunctional terpene synthase that possesses both prenyltransferase and type II terpene cyclase activity, converting isopentenyl diphosphate (IPP) and dimethylallyl diphosphate (DMAPP) into geranylgeranyl diphosphate (GGPP) and further converting GGPP into copalyl diphosphate, respectively.</text>
</comment>
<comment type="catalytic activity">
    <reaction evidence="5 6">
        <text>isopentenyl diphosphate + (2E,6E)-farnesyl diphosphate = (2E,6E,10E)-geranylgeranyl diphosphate + diphosphate</text>
        <dbReference type="Rhea" id="RHEA:17653"/>
        <dbReference type="ChEBI" id="CHEBI:33019"/>
        <dbReference type="ChEBI" id="CHEBI:58756"/>
        <dbReference type="ChEBI" id="CHEBI:128769"/>
        <dbReference type="ChEBI" id="CHEBI:175763"/>
        <dbReference type="EC" id="2.5.1.29"/>
    </reaction>
    <physiologicalReaction direction="left-to-right" evidence="5 6">
        <dbReference type="Rhea" id="RHEA:17654"/>
    </physiologicalReaction>
</comment>
<comment type="catalytic activity">
    <reaction evidence="5 6">
        <text>(2E,6E,10E)-geranylgeranyl diphosphate = (+)-copalyl diphosphate</text>
        <dbReference type="Rhea" id="RHEA:24316"/>
        <dbReference type="ChEBI" id="CHEBI:58635"/>
        <dbReference type="ChEBI" id="CHEBI:58756"/>
        <dbReference type="EC" id="5.5.1.12"/>
    </reaction>
    <physiologicalReaction direction="left-to-right" evidence="5 6">
        <dbReference type="Rhea" id="RHEA:24317"/>
    </physiologicalReaction>
</comment>
<comment type="cofactor">
    <cofactor evidence="2">
        <name>Mg(2+)</name>
        <dbReference type="ChEBI" id="CHEBI:18420"/>
    </cofactor>
    <text evidence="2">Binds 4 Mg(2+) ions per subunit.</text>
</comment>
<comment type="biophysicochemical properties">
    <kinetics>
        <KM evidence="6">50 uM for DMAPP (for prenyltransferase activity)</KM>
        <KM evidence="6">190 uM for IPP (for prenyltransferase activity)</KM>
    </kinetics>
</comment>
<comment type="subunit">
    <text evidence="6">Homohexamer.</text>
</comment>
<comment type="domain">
    <text evidence="5">The bifunctional copalyl diphosphate synthase is composed of an N-terminal type II terpene cyclase (TC) catalytic domain and a C-terminal prenyltransferase (PT) catalytic domain which are separated by a linker region.</text>
</comment>
<comment type="domain">
    <text evidence="9 10">The conserved DXDD and DDXXD motifs are important for the catalytic activity, presumably through binding to Mg(2+).</text>
</comment>
<comment type="similarity">
    <text evidence="8">In the N-terminal section; belongs to the terpene synthase family.</text>
</comment>
<comment type="similarity">
    <text evidence="8">In the C-terminal section; belongs to the FPP/GGPP synthase family.</text>
</comment>
<accession>A0A348FUE1</accession>
<name>PVCPS_TALVE</name>
<proteinExistence type="evidence at protein level"/>
<reference key="1">
    <citation type="journal article" date="2017" name="ChemBioChem">
        <title>Identification of chimeric alpha-beta-gamma diterpene synthases possessing both Type II terpene cyclase and prenyltransferase activities.</title>
        <authorList>
            <person name="Mitsuhashi T."/>
            <person name="Okada M."/>
            <person name="Abe I."/>
        </authorList>
    </citation>
    <scope>NUCLEOTIDE SEQUENCE [GENOMIC DNA]</scope>
    <scope>DOMAIN</scope>
    <scope>FUNCTION</scope>
    <scope>CATALYTIC ACTIVITY</scope>
    <scope>MUTAGENESIS OF ASP-313 AND ASP-727</scope>
    <source>
        <strain>TPU1311</strain>
    </source>
</reference>
<reference key="2">
    <citation type="journal article" date="2020" name="J. Struct. Biol.">
        <title>Higher-order oligomerization of a chimeric alpha-beta-gamma bifunctional diterpene synthase with prenyltransferase and class II cyclase activities is concentration-dependent.</title>
        <authorList>
            <person name="Ronnebaum T.A."/>
            <person name="Gupta K."/>
            <person name="Christianson D.W."/>
        </authorList>
    </citation>
    <scope>X-RAY CRYSTALLOGRAPHY (2.41 ANGSTROMS) OF 660-963</scope>
    <scope>SUBUNIT</scope>
    <scope>DOMAIN</scope>
    <scope>FUNCTION</scope>
    <scope>CATALYTIC ACTIVITY</scope>
    <scope>BIOPHYSICOCHEMICAL PROPERTIES</scope>
</reference>
<feature type="chain" id="PRO_0000453797" description="Copalyl diphosphate synthase">
    <location>
        <begin position="1"/>
        <end position="963"/>
    </location>
</feature>
<feature type="region of interest" description="Type II terpene cyclase (TC)" evidence="9 10">
    <location>
        <begin position="1"/>
        <end position="539"/>
    </location>
</feature>
<feature type="region of interest" description="Substrate binding" evidence="1">
    <location>
        <begin position="227"/>
        <end position="292"/>
    </location>
</feature>
<feature type="region of interest" description="Linker" evidence="9 10">
    <location>
        <begin position="540"/>
        <end position="659"/>
    </location>
</feature>
<feature type="region of interest" description="Disordered" evidence="4">
    <location>
        <begin position="627"/>
        <end position="657"/>
    </location>
</feature>
<feature type="region of interest" description="Geranylfarnesyl diphosphate synthase (PT)" evidence="9 10">
    <location>
        <begin position="660"/>
        <end position="963"/>
    </location>
</feature>
<feature type="short sequence motif" description="DXDD" evidence="9 10">
    <location>
        <begin position="311"/>
        <end position="314"/>
    </location>
</feature>
<feature type="short sequence motif" description="NSE/DTE" evidence="9 10">
    <location>
        <begin position="333"/>
        <end position="341"/>
    </location>
</feature>
<feature type="short sequence motif" description="DDXXD 1" evidence="9 10">
    <location>
        <begin position="727"/>
        <end position="731"/>
    </location>
</feature>
<feature type="short sequence motif" description="DDXXD 2" evidence="9 10">
    <location>
        <begin position="851"/>
        <end position="855"/>
    </location>
</feature>
<feature type="compositionally biased region" description="Polar residues" evidence="4">
    <location>
        <begin position="627"/>
        <end position="648"/>
    </location>
</feature>
<feature type="binding site" evidence="3">
    <location>
        <position position="311"/>
    </location>
    <ligand>
        <name>Mg(2+)</name>
        <dbReference type="ChEBI" id="CHEBI:18420"/>
        <label>1</label>
    </ligand>
</feature>
<feature type="binding site" evidence="3">
    <location>
        <position position="311"/>
    </location>
    <ligand>
        <name>Mg(2+)</name>
        <dbReference type="ChEBI" id="CHEBI:18420"/>
        <label>2</label>
    </ligand>
</feature>
<feature type="binding site" evidence="3">
    <location>
        <position position="314"/>
    </location>
    <ligand>
        <name>Mg(2+)</name>
        <dbReference type="ChEBI" id="CHEBI:18420"/>
        <label>1</label>
    </ligand>
</feature>
<feature type="binding site" evidence="3">
    <location>
        <position position="314"/>
    </location>
    <ligand>
        <name>Mg(2+)</name>
        <dbReference type="ChEBI" id="CHEBI:18420"/>
        <label>2</label>
    </ligand>
</feature>
<feature type="binding site" evidence="1">
    <location>
        <begin position="337"/>
        <end position="341"/>
    </location>
    <ligand>
        <name>substrate</name>
    </ligand>
</feature>
<feature type="binding site" evidence="1">
    <location>
        <begin position="521"/>
        <end position="522"/>
    </location>
    <ligand>
        <name>substrate</name>
    </ligand>
</feature>
<feature type="binding site" evidence="2">
    <location>
        <position position="688"/>
    </location>
    <ligand>
        <name>isopentenyl diphosphate</name>
        <dbReference type="ChEBI" id="CHEBI:128769"/>
    </ligand>
</feature>
<feature type="binding site" evidence="2">
    <location>
        <position position="691"/>
    </location>
    <ligand>
        <name>isopentenyl diphosphate</name>
        <dbReference type="ChEBI" id="CHEBI:128769"/>
    </ligand>
</feature>
<feature type="binding site" evidence="2">
    <location>
        <position position="720"/>
    </location>
    <ligand>
        <name>isopentenyl diphosphate</name>
        <dbReference type="ChEBI" id="CHEBI:128769"/>
    </ligand>
</feature>
<feature type="binding site" evidence="2">
    <location>
        <position position="727"/>
    </location>
    <ligand>
        <name>Mg(2+)</name>
        <dbReference type="ChEBI" id="CHEBI:18420"/>
        <label>3</label>
    </ligand>
</feature>
<feature type="binding site" evidence="2">
    <location>
        <position position="727"/>
    </location>
    <ligand>
        <name>Mg(2+)</name>
        <dbReference type="ChEBI" id="CHEBI:18420"/>
        <label>4</label>
    </ligand>
</feature>
<feature type="binding site" evidence="2">
    <location>
        <position position="731"/>
    </location>
    <ligand>
        <name>Mg(2+)</name>
        <dbReference type="ChEBI" id="CHEBI:18420"/>
        <label>3</label>
    </ligand>
</feature>
<feature type="binding site" evidence="2">
    <location>
        <position position="731"/>
    </location>
    <ligand>
        <name>Mg(2+)</name>
        <dbReference type="ChEBI" id="CHEBI:18420"/>
        <label>4</label>
    </ligand>
</feature>
<feature type="binding site" evidence="2">
    <location>
        <position position="736"/>
    </location>
    <ligand>
        <name>dimethylallyl diphosphate</name>
        <dbReference type="ChEBI" id="CHEBI:57623"/>
    </ligand>
</feature>
<feature type="binding site" evidence="2">
    <location>
        <position position="737"/>
    </location>
    <ligand>
        <name>isopentenyl diphosphate</name>
        <dbReference type="ChEBI" id="CHEBI:128769"/>
    </ligand>
</feature>
<feature type="binding site" evidence="2">
    <location>
        <position position="814"/>
    </location>
    <ligand>
        <name>dimethylallyl diphosphate</name>
        <dbReference type="ChEBI" id="CHEBI:57623"/>
    </ligand>
</feature>
<feature type="binding site" evidence="2">
    <location>
        <position position="815"/>
    </location>
    <ligand>
        <name>dimethylallyl diphosphate</name>
        <dbReference type="ChEBI" id="CHEBI:57623"/>
    </ligand>
</feature>
<feature type="binding site" evidence="2">
    <location>
        <position position="848"/>
    </location>
    <ligand>
        <name>dimethylallyl diphosphate</name>
        <dbReference type="ChEBI" id="CHEBI:57623"/>
    </ligand>
</feature>
<feature type="binding site" evidence="2">
    <location>
        <position position="855"/>
    </location>
    <ligand>
        <name>dimethylallyl diphosphate</name>
        <dbReference type="ChEBI" id="CHEBI:57623"/>
    </ligand>
</feature>
<feature type="binding site" evidence="2">
    <location>
        <position position="865"/>
    </location>
    <ligand>
        <name>dimethylallyl diphosphate</name>
        <dbReference type="ChEBI" id="CHEBI:57623"/>
    </ligand>
</feature>
<feature type="binding site" evidence="2">
    <location>
        <position position="875"/>
    </location>
    <ligand>
        <name>dimethylallyl diphosphate</name>
        <dbReference type="ChEBI" id="CHEBI:57623"/>
    </ligand>
</feature>
<feature type="mutagenesis site" description="Impairs type II TC activity, but retains the PT activity, producing GGPP." evidence="5">
    <original>D</original>
    <variation>A</variation>
    <location>
        <position position="313"/>
    </location>
</feature>
<feature type="mutagenesis site" description="Impairs PT, but retains the type II TC activity, converting GGPP into copalyl diphosphate." evidence="5">
    <original>D</original>
    <variation>A</variation>
    <location>
        <position position="727"/>
    </location>
</feature>
<feature type="helix" evidence="11">
    <location>
        <begin position="669"/>
        <end position="675"/>
    </location>
</feature>
<feature type="helix" evidence="11">
    <location>
        <begin position="677"/>
        <end position="683"/>
    </location>
</feature>
<feature type="helix" evidence="11">
    <location>
        <begin position="690"/>
        <end position="702"/>
    </location>
</feature>
<feature type="helix" evidence="11">
    <location>
        <begin position="706"/>
        <end position="731"/>
    </location>
</feature>
<feature type="strand" evidence="11">
    <location>
        <begin position="734"/>
        <end position="736"/>
    </location>
</feature>
<feature type="helix" evidence="11">
    <location>
        <begin position="743"/>
        <end position="746"/>
    </location>
</feature>
<feature type="helix" evidence="11">
    <location>
        <begin position="748"/>
        <end position="766"/>
    </location>
</feature>
<feature type="helix" evidence="11">
    <location>
        <begin position="767"/>
        <end position="769"/>
    </location>
</feature>
<feature type="helix" evidence="11">
    <location>
        <begin position="772"/>
        <end position="798"/>
    </location>
</feature>
<feature type="helix" evidence="11">
    <location>
        <begin position="804"/>
        <end position="813"/>
    </location>
</feature>
<feature type="helix" evidence="11">
    <location>
        <begin position="815"/>
        <end position="828"/>
    </location>
</feature>
<feature type="helix" evidence="11">
    <location>
        <begin position="837"/>
        <end position="857"/>
    </location>
</feature>
<feature type="helix" evidence="11">
    <location>
        <begin position="859"/>
        <end position="865"/>
    </location>
</feature>
<feature type="helix" evidence="11">
    <location>
        <begin position="869"/>
        <end position="872"/>
    </location>
</feature>
<feature type="helix" evidence="11">
    <location>
        <begin position="878"/>
        <end position="886"/>
    </location>
</feature>
<feature type="helix" evidence="11">
    <location>
        <begin position="892"/>
        <end position="899"/>
    </location>
</feature>
<feature type="helix" evidence="11">
    <location>
        <begin position="904"/>
        <end position="916"/>
    </location>
</feature>
<feature type="helix" evidence="11">
    <location>
        <begin position="919"/>
        <end position="943"/>
    </location>
</feature>
<feature type="helix" evidence="11">
    <location>
        <begin position="950"/>
        <end position="959"/>
    </location>
</feature>
<protein>
    <recommendedName>
        <fullName evidence="7">Copalyl diphosphate synthase</fullName>
        <shortName evidence="7">CPS</shortName>
    </recommendedName>
    <alternativeName>
        <fullName evidence="7">Bifunctional diterpene synthase PvCPS</fullName>
    </alternativeName>
    <domain>
        <recommendedName>
            <fullName evidence="7">Type II terpene cyclase</fullName>
            <ecNumber evidence="5 6">5.5.1.12</ecNumber>
        </recommendedName>
    </domain>
    <domain>
        <recommendedName>
            <fullName evidence="7">Geranylgeranyl diphosphate synthase</fullName>
            <shortName evidence="7">GGDP synthase</shortName>
            <shortName evidence="7">GGS</shortName>
            <ecNumber evidence="5 6">2.5.1.29</ecNumber>
        </recommendedName>
    </domain>
</protein>
<keyword id="KW-0002">3D-structure</keyword>
<keyword id="KW-0413">Isomerase</keyword>
<keyword id="KW-0414">Isoprene biosynthesis</keyword>
<keyword id="KW-0460">Magnesium</keyword>
<keyword id="KW-0479">Metal-binding</keyword>
<keyword id="KW-0511">Multifunctional enzyme</keyword>
<keyword id="KW-0808">Transferase</keyword>
<gene>
    <name evidence="7" type="primary">PvCPS</name>
</gene>
<dbReference type="EC" id="5.5.1.12" evidence="5 6"/>
<dbReference type="EC" id="2.5.1.29" evidence="5 6"/>
<dbReference type="EMBL" id="LC316181">
    <property type="protein sequence ID" value="BBF88128.1"/>
    <property type="molecule type" value="Genomic_DNA"/>
</dbReference>
<dbReference type="PDB" id="6V0K">
    <property type="method" value="X-ray"/>
    <property type="resolution" value="2.41 A"/>
    <property type="chains" value="A/B=660-963"/>
</dbReference>
<dbReference type="PDB" id="7S09">
    <property type="method" value="X-ray"/>
    <property type="resolution" value="3.10 A"/>
    <property type="chains" value="A/B=659-963"/>
</dbReference>
<dbReference type="PDB" id="7S0A">
    <property type="method" value="X-ray"/>
    <property type="resolution" value="2.80 A"/>
    <property type="chains" value="A/B=659-963"/>
</dbReference>
<dbReference type="PDB" id="7S0H">
    <property type="method" value="X-ray"/>
    <property type="resolution" value="3.15 A"/>
    <property type="chains" value="A/B=659-963"/>
</dbReference>
<dbReference type="PDB" id="7S0L">
    <property type="method" value="X-ray"/>
    <property type="resolution" value="2.65 A"/>
    <property type="chains" value="A/B=659-963"/>
</dbReference>
<dbReference type="PDB" id="7S0M">
    <property type="method" value="X-ray"/>
    <property type="resolution" value="2.00 A"/>
    <property type="chains" value="A/B=659-963"/>
</dbReference>
<dbReference type="PDBsum" id="6V0K"/>
<dbReference type="PDBsum" id="7S09"/>
<dbReference type="PDBsum" id="7S0A"/>
<dbReference type="PDBsum" id="7S0H"/>
<dbReference type="PDBsum" id="7S0L"/>
<dbReference type="PDBsum" id="7S0M"/>
<dbReference type="SMR" id="A0A348FUE1"/>
<dbReference type="GO" id="GO:0016853">
    <property type="term" value="F:isomerase activity"/>
    <property type="evidence" value="ECO:0007669"/>
    <property type="project" value="UniProtKB-KW"/>
</dbReference>
<dbReference type="GO" id="GO:0046872">
    <property type="term" value="F:metal ion binding"/>
    <property type="evidence" value="ECO:0007669"/>
    <property type="project" value="UniProtKB-KW"/>
</dbReference>
<dbReference type="GO" id="GO:0004659">
    <property type="term" value="F:prenyltransferase activity"/>
    <property type="evidence" value="ECO:0007669"/>
    <property type="project" value="InterPro"/>
</dbReference>
<dbReference type="GO" id="GO:0046165">
    <property type="term" value="P:alcohol biosynthetic process"/>
    <property type="evidence" value="ECO:0007669"/>
    <property type="project" value="UniProtKB-ARBA"/>
</dbReference>
<dbReference type="GO" id="GO:0008299">
    <property type="term" value="P:isoprenoid biosynthetic process"/>
    <property type="evidence" value="ECO:0007669"/>
    <property type="project" value="UniProtKB-KW"/>
</dbReference>
<dbReference type="GO" id="GO:0043386">
    <property type="term" value="P:mycotoxin biosynthetic process"/>
    <property type="evidence" value="ECO:0007669"/>
    <property type="project" value="UniProtKB-ARBA"/>
</dbReference>
<dbReference type="CDD" id="cd00685">
    <property type="entry name" value="Trans_IPPS_HT"/>
    <property type="match status" value="1"/>
</dbReference>
<dbReference type="Gene3D" id="1.50.10.160">
    <property type="match status" value="1"/>
</dbReference>
<dbReference type="Gene3D" id="1.50.10.20">
    <property type="match status" value="1"/>
</dbReference>
<dbReference type="Gene3D" id="1.10.600.10">
    <property type="entry name" value="Farnesyl Diphosphate Synthase"/>
    <property type="match status" value="1"/>
</dbReference>
<dbReference type="InterPro" id="IPR008949">
    <property type="entry name" value="Isoprenoid_synthase_dom_sf"/>
</dbReference>
<dbReference type="InterPro" id="IPR000092">
    <property type="entry name" value="Polyprenyl_synt"/>
</dbReference>
<dbReference type="InterPro" id="IPR033749">
    <property type="entry name" value="Polyprenyl_synt_CS"/>
</dbReference>
<dbReference type="InterPro" id="IPR008930">
    <property type="entry name" value="Terpenoid_cyclase/PrenylTrfase"/>
</dbReference>
<dbReference type="PANTHER" id="PTHR12001">
    <property type="entry name" value="GERANYLGERANYL PYROPHOSPHATE SYNTHASE"/>
    <property type="match status" value="1"/>
</dbReference>
<dbReference type="PANTHER" id="PTHR12001:SF44">
    <property type="entry name" value="GERANYLGERANYL PYROPHOSPHATE SYNTHASE"/>
    <property type="match status" value="1"/>
</dbReference>
<dbReference type="Pfam" id="PF00348">
    <property type="entry name" value="polyprenyl_synt"/>
    <property type="match status" value="1"/>
</dbReference>
<dbReference type="SFLD" id="SFLDS00005">
    <property type="entry name" value="Isoprenoid_Synthase_Type_I"/>
    <property type="match status" value="1"/>
</dbReference>
<dbReference type="SUPFAM" id="SSF48239">
    <property type="entry name" value="Terpenoid cyclases/Protein prenyltransferases"/>
    <property type="match status" value="1"/>
</dbReference>
<dbReference type="SUPFAM" id="SSF48576">
    <property type="entry name" value="Terpenoid synthases"/>
    <property type="match status" value="1"/>
</dbReference>
<dbReference type="PROSITE" id="PS00723">
    <property type="entry name" value="POLYPRENYL_SYNTHASE_1"/>
    <property type="match status" value="1"/>
</dbReference>
<dbReference type="PROSITE" id="PS00444">
    <property type="entry name" value="POLYPRENYL_SYNTHASE_2"/>
    <property type="match status" value="1"/>
</dbReference>
<organism>
    <name type="scientific">Talaromyces verruculosus</name>
    <name type="common">Penicillium verruculosum</name>
    <dbReference type="NCBI Taxonomy" id="198730"/>
    <lineage>
        <taxon>Eukaryota</taxon>
        <taxon>Fungi</taxon>
        <taxon>Dikarya</taxon>
        <taxon>Ascomycota</taxon>
        <taxon>Pezizomycotina</taxon>
        <taxon>Eurotiomycetes</taxon>
        <taxon>Eurotiomycetidae</taxon>
        <taxon>Eurotiales</taxon>
        <taxon>Trichocomaceae</taxon>
        <taxon>Talaromyces</taxon>
        <taxon>Talaromyces sect. Talaromyces</taxon>
    </lineage>
</organism>